<protein>
    <recommendedName>
        <fullName evidence="4">Protein adenylyltransferase MntA</fullName>
        <ecNumber evidence="3">2.7.7.108</ecNumber>
    </recommendedName>
    <alternativeName>
        <fullName evidence="4">Antitoxin MNT</fullName>
    </alternativeName>
    <alternativeName>
        <fullName evidence="4">Minimal nucleotidyltransferase</fullName>
    </alternativeName>
    <alternativeName>
        <fullName evidence="4">Protein adenylyltransferase MNT</fullName>
    </alternativeName>
</protein>
<name>MNTA_APHF2</name>
<reference key="1">
    <citation type="journal article" date="2015" name="Genome Announc.">
        <title>Draft Genome Sequence of the Cyanobacterium Aphanizomenon flos-aquae Strain 2012/KM1/D3, Isolated from the Curonian Lagoon (Baltic Sea).</title>
        <authorList>
            <person name="Sulcius S."/>
            <person name="Alzbutas G."/>
            <person name="Kvederaviciute K."/>
            <person name="Koreiviene J."/>
            <person name="Zakrys L."/>
            <person name="Lubys A."/>
            <person name="Paskauskas R."/>
        </authorList>
    </citation>
    <scope>NUCLEOTIDE SEQUENCE [LARGE SCALE GENOMIC DNA]</scope>
    <source>
        <strain>2012/KM1/D3</strain>
    </source>
</reference>
<reference evidence="7 8" key="2">
    <citation type="journal article" date="2020" name="Mol. Cell">
        <title>HEPN-MNT Toxin-Antitoxin System: The HEPN Ribonuclease Is Neutralized by OligoAMPylation.</title>
        <authorList>
            <person name="Songailiene I."/>
            <person name="Juozapaitis J."/>
            <person name="Tamulaitiene G."/>
            <person name="Ruksenaite A."/>
            <person name="Sulcius S."/>
            <person name="Sasnauskas G."/>
            <person name="Venclovas C."/>
            <person name="Siksnys V."/>
        </authorList>
    </citation>
    <scope>X-RAY CRYSTALLOGRAPHY (2.00 ANGSTROMS) IN COMPLEX WITH HEPT</scope>
    <scope>FUNCTION AS AN ANTITOXIN</scope>
    <scope>FUNCTION AS AN ADENYLYLTRANSFERASE</scope>
    <scope>CATALYTIC ACTIVITY</scope>
    <scope>SUBSTRATE SPECIFICITY</scope>
    <scope>COFACTOR</scope>
    <scope>SUBUNIT</scope>
    <scope>PROBABLE ACTIVE SITE</scope>
    <scope>MUTAGENESIS OF PHE-31; 44-ASP--ASP-46; ASP-44 AND 127-ASN--VAL-150</scope>
    <source>
        <strain>2012/KM1/D3</strain>
    </source>
</reference>
<proteinExistence type="evidence at protein level"/>
<organism>
    <name type="scientific">Aphanizomenon flos-aquae (strain 2012/KM1/D3)</name>
    <dbReference type="NCBI Taxonomy" id="1532906"/>
    <lineage>
        <taxon>Bacteria</taxon>
        <taxon>Bacillati</taxon>
        <taxon>Cyanobacteriota</taxon>
        <taxon>Cyanophyceae</taxon>
        <taxon>Nostocales</taxon>
        <taxon>Aphanizomenonaceae</taxon>
        <taxon>Aphanizomenon</taxon>
    </lineage>
</organism>
<comment type="function">
    <text evidence="3">Antitoxin component of a type VII toxin-antitoxin (TA) system. Upon cloning in E.coli neutralizes the effect of cognate toxin HepT. Neutralization is mostly due to di-AMPylation of toxin by this enzyme. Successively di-AMPylates HepT on 'Tyr-109'. In vitro will use ATP, dATP, GTP, dGTP, TTP or UTP to generate a mono-modified protein, but requires a purine nucleotide for the second modification reaction (ATP, dATP or GTP).</text>
</comment>
<comment type="catalytic activity">
    <reaction evidence="3">
        <text>L-tyrosyl-[protein] + ATP = O-(5'-adenylyl)-L-tyrosyl-[protein] + diphosphate</text>
        <dbReference type="Rhea" id="RHEA:54288"/>
        <dbReference type="Rhea" id="RHEA-COMP:10136"/>
        <dbReference type="Rhea" id="RHEA-COMP:13846"/>
        <dbReference type="ChEBI" id="CHEBI:30616"/>
        <dbReference type="ChEBI" id="CHEBI:33019"/>
        <dbReference type="ChEBI" id="CHEBI:46858"/>
        <dbReference type="ChEBI" id="CHEBI:83624"/>
        <dbReference type="EC" id="2.7.7.108"/>
    </reaction>
</comment>
<comment type="catalytic activity">
    <reaction evidence="3">
        <text>O-(5'-adenylyl)-L-tyrosyl-[protein] + ATP = O-[5'-(adenylyl-(5'-&gt;3')-adenylyl)]-L-tyrosyl-[protein] + diphosphate</text>
        <dbReference type="Rhea" id="RHEA:66528"/>
        <dbReference type="Rhea" id="RHEA-COMP:13846"/>
        <dbReference type="Rhea" id="RHEA-COMP:17046"/>
        <dbReference type="ChEBI" id="CHEBI:30616"/>
        <dbReference type="ChEBI" id="CHEBI:33019"/>
        <dbReference type="ChEBI" id="CHEBI:83624"/>
        <dbReference type="ChEBI" id="CHEBI:167160"/>
    </reaction>
</comment>
<comment type="cofactor">
    <cofactor evidence="3">
        <name>Mg(2+)</name>
        <dbReference type="ChEBI" id="CHEBI:18420"/>
    </cofactor>
    <text evidence="1 3">Mn(2+) works as well as Mg(2+), Co(2+), Ni(2+) and Zn(2+) work less well (PubMed:33290744). Bind 2 Mg(2+) per subunit (By similarity).</text>
</comment>
<comment type="subunit">
    <text evidence="3">Forms a complex with HepT, probably MntA(1):HepT(2) in vivo; can only be purified when both 'Arg-102' and 'Tyr-109' (or 'His-107' and 'Tyr-109') of HepThave been mutated. The fully di-AMPylated HepT homodimer is not found in a complex with MntA.</text>
</comment>
<comment type="miscellaneous">
    <text evidence="2">Part of a locus that includes subtype I-D CRISPR-Cas genes.</text>
</comment>
<comment type="similarity">
    <text evidence="5">Belongs to the MntA antitoxin family.</text>
</comment>
<gene>
    <name evidence="5" type="primary">mntA</name>
    <name evidence="4" type="synonym">mnt</name>
    <name type="ORF">OA07_26450</name>
</gene>
<keyword id="KW-0002">3D-structure</keyword>
<keyword id="KW-0067">ATP-binding</keyword>
<keyword id="KW-0460">Magnesium</keyword>
<keyword id="KW-0479">Metal-binding</keyword>
<keyword id="KW-0547">Nucleotide-binding</keyword>
<keyword id="KW-0548">Nucleotidyltransferase</keyword>
<keyword id="KW-1277">Toxin-antitoxin system</keyword>
<keyword id="KW-0808">Transferase</keyword>
<keyword id="KW-0843">Virulence</keyword>
<dbReference type="EC" id="2.7.7.108" evidence="3"/>
<dbReference type="EMBL" id="JSDP01000312">
    <property type="protein sequence ID" value="KHG38970.1"/>
    <property type="molecule type" value="Genomic_DNA"/>
</dbReference>
<dbReference type="RefSeq" id="WP_039205097.1">
    <property type="nucleotide sequence ID" value="NZ_JSDP01000312.1"/>
</dbReference>
<dbReference type="PDB" id="7AE2">
    <property type="method" value="X-ray"/>
    <property type="resolution" value="2.00 A"/>
    <property type="chains" value="B=1-150"/>
</dbReference>
<dbReference type="PDB" id="7AE9">
    <property type="method" value="X-ray"/>
    <property type="resolution" value="2.90 A"/>
    <property type="chains" value="E/F/G/H=1-147"/>
</dbReference>
<dbReference type="PDBsum" id="7AE2"/>
<dbReference type="PDBsum" id="7AE9"/>
<dbReference type="SMR" id="A0A0B0QJN8"/>
<dbReference type="GO" id="GO:0005524">
    <property type="term" value="F:ATP binding"/>
    <property type="evidence" value="ECO:0007669"/>
    <property type="project" value="UniProtKB-KW"/>
</dbReference>
<dbReference type="GO" id="GO:0046872">
    <property type="term" value="F:metal ion binding"/>
    <property type="evidence" value="ECO:0007669"/>
    <property type="project" value="UniProtKB-KW"/>
</dbReference>
<dbReference type="GO" id="GO:0016779">
    <property type="term" value="F:nucleotidyltransferase activity"/>
    <property type="evidence" value="ECO:0007669"/>
    <property type="project" value="UniProtKB-KW"/>
</dbReference>
<dbReference type="CDD" id="cd05403">
    <property type="entry name" value="NT_KNTase_like"/>
    <property type="match status" value="1"/>
</dbReference>
<dbReference type="Gene3D" id="3.30.460.10">
    <property type="entry name" value="Beta Polymerase, domain 2"/>
    <property type="match status" value="1"/>
</dbReference>
<dbReference type="InterPro" id="IPR043519">
    <property type="entry name" value="NT_sf"/>
</dbReference>
<dbReference type="InterPro" id="IPR041633">
    <property type="entry name" value="Polbeta"/>
</dbReference>
<dbReference type="InterPro" id="IPR052930">
    <property type="entry name" value="TA_antitoxin_MntA"/>
</dbReference>
<dbReference type="NCBIfam" id="NF047752">
    <property type="entry name" value="MntA_antitoxin"/>
    <property type="match status" value="1"/>
</dbReference>
<dbReference type="PANTHER" id="PTHR43852">
    <property type="entry name" value="NUCLEOTIDYLTRANSFERASE"/>
    <property type="match status" value="1"/>
</dbReference>
<dbReference type="PANTHER" id="PTHR43852:SF4">
    <property type="entry name" value="NUCLEOTIDYLTRANSFERASE"/>
    <property type="match status" value="1"/>
</dbReference>
<dbReference type="Pfam" id="PF18765">
    <property type="entry name" value="Polbeta"/>
    <property type="match status" value="1"/>
</dbReference>
<dbReference type="SUPFAM" id="SSF81301">
    <property type="entry name" value="Nucleotidyltransferase"/>
    <property type="match status" value="1"/>
</dbReference>
<sequence length="150" mass="17359">MQDKIPTIAELRELSLRLLTKIPYLKMLVLFGSRATGNINANSDWDFAVLYDEEKYNLYIQNNPLAAFVIPGILGEIFKINSDKIDIVELNHCSKLIAHFVARDGKVLYEEPGDEFDKFQQRVLLSNTEIKKIEKTKLENIENFLQRWGV</sequence>
<evidence type="ECO:0000250" key="1">
    <source>
        <dbReference type="UniProtKB" id="Q8ECH7"/>
    </source>
</evidence>
<evidence type="ECO:0000269" key="2">
    <source>
    </source>
</evidence>
<evidence type="ECO:0000269" key="3">
    <source>
    </source>
</evidence>
<evidence type="ECO:0000303" key="4">
    <source>
    </source>
</evidence>
<evidence type="ECO:0000305" key="5"/>
<evidence type="ECO:0000305" key="6">
    <source>
    </source>
</evidence>
<evidence type="ECO:0007744" key="7">
    <source>
        <dbReference type="PDB" id="7AE2"/>
    </source>
</evidence>
<evidence type="ECO:0007744" key="8">
    <source>
        <dbReference type="PDB" id="7AE9"/>
    </source>
</evidence>
<evidence type="ECO:0007829" key="9">
    <source>
        <dbReference type="PDB" id="7AE2"/>
    </source>
</evidence>
<accession>A0A0B0QJN8</accession>
<feature type="chain" id="PRO_0000452435" description="Protein adenylyltransferase MntA">
    <location>
        <begin position="1"/>
        <end position="150"/>
    </location>
</feature>
<feature type="short sequence motif" description="GSX(10)DXD motif" evidence="1">
    <location>
        <begin position="32"/>
        <end position="46"/>
    </location>
</feature>
<feature type="active site" evidence="6">
    <location>
        <position position="44"/>
    </location>
</feature>
<feature type="active site" evidence="6">
    <location>
        <position position="46"/>
    </location>
</feature>
<feature type="binding site" evidence="1">
    <location>
        <position position="44"/>
    </location>
    <ligand>
        <name>Mg(2+)</name>
        <dbReference type="ChEBI" id="CHEBI:18420"/>
        <label>1</label>
    </ligand>
</feature>
<feature type="binding site" evidence="1">
    <location>
        <position position="44"/>
    </location>
    <ligand>
        <name>Mg(2+)</name>
        <dbReference type="ChEBI" id="CHEBI:18420"/>
        <label>2</label>
    </ligand>
</feature>
<feature type="binding site" evidence="1">
    <location>
        <position position="46"/>
    </location>
    <ligand>
        <name>Mg(2+)</name>
        <dbReference type="ChEBI" id="CHEBI:18420"/>
        <label>1</label>
    </ligand>
</feature>
<feature type="binding site" evidence="1">
    <location>
        <position position="46"/>
    </location>
    <ligand>
        <name>Mg(2+)</name>
        <dbReference type="ChEBI" id="CHEBI:18420"/>
        <label>2</label>
    </ligand>
</feature>
<feature type="binding site" evidence="1">
    <location>
        <position position="86"/>
    </location>
    <ligand>
        <name>Mg(2+)</name>
        <dbReference type="ChEBI" id="CHEBI:18420"/>
        <label>1</label>
    </ligand>
</feature>
<feature type="mutagenesis site" description="Very small amounts of HepT are di-AMPylated." evidence="3">
    <original>F</original>
    <variation>A</variation>
    <location>
        <position position="31"/>
    </location>
</feature>
<feature type="mutagenesis site" description="No longer neutralizes HepT, no di-AMPylation of HepT." evidence="3">
    <original>DWD</original>
    <variation>AWA</variation>
    <location>
        <begin position="44"/>
        <end position="46"/>
    </location>
</feature>
<feature type="mutagenesis site" description="No longer neutralizes HepT, no di-AMPylation of HepT." evidence="3">
    <original>D</original>
    <variation>A</variation>
    <location>
        <position position="44"/>
    </location>
</feature>
<feature type="mutagenesis site" description="No di-AMPylation of HepT." evidence="3">
    <location>
        <begin position="127"/>
        <end position="150"/>
    </location>
</feature>
<feature type="helix" evidence="9">
    <location>
        <begin position="8"/>
        <end position="14"/>
    </location>
</feature>
<feature type="helix" evidence="9">
    <location>
        <begin position="15"/>
        <end position="17"/>
    </location>
</feature>
<feature type="helix" evidence="9">
    <location>
        <begin position="18"/>
        <end position="21"/>
    </location>
</feature>
<feature type="strand" evidence="9">
    <location>
        <begin position="25"/>
        <end position="32"/>
    </location>
</feature>
<feature type="turn" evidence="9">
    <location>
        <begin position="33"/>
        <end position="35"/>
    </location>
</feature>
<feature type="strand" evidence="9">
    <location>
        <begin position="45"/>
        <end position="51"/>
    </location>
</feature>
<feature type="helix" evidence="9">
    <location>
        <begin position="53"/>
        <end position="62"/>
    </location>
</feature>
<feature type="helix" evidence="9">
    <location>
        <begin position="67"/>
        <end position="69"/>
    </location>
</feature>
<feature type="helix" evidence="9">
    <location>
        <begin position="70"/>
        <end position="78"/>
    </location>
</feature>
<feature type="helix" evidence="9">
    <location>
        <begin position="82"/>
        <end position="84"/>
    </location>
</feature>
<feature type="strand" evidence="9">
    <location>
        <begin position="85"/>
        <end position="92"/>
    </location>
</feature>
<feature type="helix" evidence="9">
    <location>
        <begin position="95"/>
        <end position="104"/>
    </location>
</feature>
<feature type="strand" evidence="9">
    <location>
        <begin position="106"/>
        <end position="112"/>
    </location>
</feature>
<feature type="helix" evidence="9">
    <location>
        <begin position="115"/>
        <end position="123"/>
    </location>
</feature>
<feature type="helix" evidence="9">
    <location>
        <begin position="127"/>
        <end position="148"/>
    </location>
</feature>